<organism>
    <name type="scientific">Murine coronavirus (strain A59)</name>
    <name type="common">MHV-A59</name>
    <name type="synonym">Murine hepatitis virus</name>
    <dbReference type="NCBI Taxonomy" id="11142"/>
    <lineage>
        <taxon>Viruses</taxon>
        <taxon>Riboviria</taxon>
        <taxon>Orthornavirae</taxon>
        <taxon>Pisuviricota</taxon>
        <taxon>Pisoniviricetes</taxon>
        <taxon>Nidovirales</taxon>
        <taxon>Cornidovirineae</taxon>
        <taxon>Coronaviridae</taxon>
        <taxon>Orthocoronavirinae</taxon>
        <taxon>Betacoronavirus</taxon>
        <taxon>Embecovirus</taxon>
        <taxon>Murine coronavirus</taxon>
    </lineage>
</organism>
<proteinExistence type="inferred from homology"/>
<organismHost>
    <name type="scientific">Mus musculus</name>
    <name type="common">Mouse</name>
    <dbReference type="NCBI Taxonomy" id="10090"/>
</organismHost>
<accession>P69614</accession>
<accession>P18453</accession>
<accession>P18456</accession>
<gene>
    <name type="primary">N</name>
    <name type="synonym">I</name>
    <name type="ORF">7b</name>
</gene>
<dbReference type="EMBL" id="X00509">
    <property type="status" value="NOT_ANNOTATED_CDS"/>
    <property type="molecule type" value="Genomic_RNA"/>
</dbReference>
<dbReference type="EMBL" id="M35256">
    <property type="protein sequence ID" value="AAA46448.1"/>
    <property type="molecule type" value="Genomic_RNA"/>
</dbReference>
<dbReference type="EMBL" id="AF029248">
    <property type="status" value="NOT_ANNOTATED_CDS"/>
    <property type="molecule type" value="Genomic_RNA"/>
</dbReference>
<dbReference type="PIR" id="E45340">
    <property type="entry name" value="E45340"/>
</dbReference>
<dbReference type="Proteomes" id="UP000007192">
    <property type="component" value="Segment"/>
</dbReference>
<dbReference type="GO" id="GO:0044423">
    <property type="term" value="C:virion component"/>
    <property type="evidence" value="ECO:0007669"/>
    <property type="project" value="UniProtKB-KW"/>
</dbReference>
<dbReference type="CDD" id="cd21662">
    <property type="entry name" value="embe-CoV_Protein-I_like"/>
    <property type="match status" value="1"/>
</dbReference>
<dbReference type="InterPro" id="IPR004876">
    <property type="entry name" value="Corona_nucI"/>
</dbReference>
<dbReference type="InterPro" id="IPR044311">
    <property type="entry name" value="N2-like_embe-CoV"/>
</dbReference>
<dbReference type="Pfam" id="PF03187">
    <property type="entry name" value="Corona_I"/>
    <property type="match status" value="1"/>
</dbReference>
<protein>
    <recommendedName>
        <fullName>Protein I</fullName>
    </recommendedName>
    <alternativeName>
        <fullName>Accessory protein N2</fullName>
    </alternativeName>
    <alternativeName>
        <fullName>N internal ORF protein</fullName>
        <shortName>IORF</shortName>
    </alternativeName>
    <alternativeName>
        <fullName>Protein in nucleocapsid ORF</fullName>
    </alternativeName>
</protein>
<evidence type="ECO:0000269" key="1">
    <source>
    </source>
</evidence>
<evidence type="ECO:0000305" key="2"/>
<evidence type="ECO:0000305" key="3">
    <source>
    </source>
</evidence>
<comment type="function">
    <text evidence="1">Structural protein that is not essential for the viral replication either in tissue culture or in its natural host. Confers a small growth advantage.</text>
</comment>
<comment type="subcellular location">
    <subcellularLocation>
        <location evidence="3">Virion</location>
    </subcellularLocation>
</comment>
<comment type="miscellaneous">
    <text>The gene encoding this protein is included within the N gene (alternative ORF).</text>
</comment>
<comment type="similarity">
    <text evidence="2">Belongs to the coronavirus I protein family.</text>
</comment>
<sequence>MESSRRPLGLTKPSVDQIIKIEAEGISQSRLQLLNPTPGVWFPITPGFLALPSSKRERSFSLQKDKECLLPMESPLQSKRDIGIDTTAVLLKHLMGSRSNYCPDGIFTILAQGPMLEPVMETALKVSSGLQTAKRTPIPALILSKGTQAVMRLFLLGLRPARYCLRAFMLKALEGLHLLADLVRGHNPVGQIIALEAVPTSASLPLL</sequence>
<keyword id="KW-1185">Reference proteome</keyword>
<keyword id="KW-0946">Virion</keyword>
<name>IORF_CVMA5</name>
<reference key="1">
    <citation type="journal article" date="1983" name="Nucleic Acids Res.">
        <title>Sequence of the nucleocapsid gene from murine coronavirus MHV-A59.</title>
        <authorList>
            <person name="Armstrong J."/>
            <person name="Smeekens S."/>
            <person name="Rottier P.J.M."/>
        </authorList>
    </citation>
    <scope>NUCLEOTIDE SEQUENCE [GENOMIC RNA]</scope>
</reference>
<reference key="2">
    <citation type="journal article" date="1990" name="Virology">
        <title>Sequence comparison of the N genes of five strains of the coronavirus mouse hepatitis virus suggests a three domain structure for the nucleocapsid protein.</title>
        <authorList>
            <person name="Parker M.M."/>
            <person name="Masters P.S."/>
        </authorList>
    </citation>
    <scope>NUCLEOTIDE SEQUENCE [GENOMIC RNA]</scope>
</reference>
<reference key="3">
    <citation type="journal article" date="1997" name="Virology">
        <title>Altered pathogenesis of a mutant of the murine coronavirus MHV-A59 is associated with a Q159L amino acid substitution in the spike protein.</title>
        <authorList>
            <person name="Leparc-Goffart I."/>
            <person name="Hingley S.T."/>
            <person name="Chua M.M."/>
            <person name="Jiang X."/>
            <person name="Lavi E."/>
            <person name="Weiss S.R."/>
        </authorList>
    </citation>
    <scope>NUCLEOTIDE SEQUENCE [GENOMIC RNA]</scope>
    <source>
        <strain>Isolate C12 mutant</strain>
    </source>
</reference>
<reference key="4">
    <citation type="journal article" date="1997" name="J. Virol.">
        <title>The internal open reading frame within the nucleocapsid gene of mouse hepatitis virus encodes a structural protein that is not essential for viral replication.</title>
        <authorList>
            <person name="Fischer F."/>
            <person name="Peng D."/>
            <person name="Hingley S.T."/>
            <person name="Weiss S.R."/>
            <person name="Masters P.S."/>
        </authorList>
    </citation>
    <scope>FUNCTION</scope>
    <scope>SUBCELLULAR LOCATION</scope>
</reference>
<feature type="chain" id="PRO_0000106122" description="Protein I">
    <location>
        <begin position="1"/>
        <end position="207"/>
    </location>
</feature>
<feature type="sequence conflict" description="In Ref. 1." evidence="2" ref="1">
    <original>V</original>
    <variation>E</variation>
    <location>
        <position position="126"/>
    </location>
</feature>